<dbReference type="EC" id="1.14.99.60" evidence="1"/>
<dbReference type="EMBL" id="CP001635">
    <property type="protein sequence ID" value="ACS17738.1"/>
    <property type="molecule type" value="Genomic_DNA"/>
</dbReference>
<dbReference type="SMR" id="C5CPL7"/>
<dbReference type="STRING" id="543728.Vapar_1087"/>
<dbReference type="KEGG" id="vap:Vapar_1087"/>
<dbReference type="eggNOG" id="COG2941">
    <property type="taxonomic scope" value="Bacteria"/>
</dbReference>
<dbReference type="HOGENOM" id="CLU_088601_0_0_4"/>
<dbReference type="OrthoDB" id="5192789at2"/>
<dbReference type="UniPathway" id="UPA00232"/>
<dbReference type="GO" id="GO:0005886">
    <property type="term" value="C:plasma membrane"/>
    <property type="evidence" value="ECO:0007669"/>
    <property type="project" value="UniProtKB-SubCell"/>
</dbReference>
<dbReference type="GO" id="GO:0008682">
    <property type="term" value="F:3-demethoxyubiquinol 3-hydroxylase activity"/>
    <property type="evidence" value="ECO:0007669"/>
    <property type="project" value="UniProtKB-EC"/>
</dbReference>
<dbReference type="GO" id="GO:0046872">
    <property type="term" value="F:metal ion binding"/>
    <property type="evidence" value="ECO:0007669"/>
    <property type="project" value="UniProtKB-KW"/>
</dbReference>
<dbReference type="GO" id="GO:0006744">
    <property type="term" value="P:ubiquinone biosynthetic process"/>
    <property type="evidence" value="ECO:0007669"/>
    <property type="project" value="UniProtKB-UniRule"/>
</dbReference>
<dbReference type="CDD" id="cd01042">
    <property type="entry name" value="DMQH"/>
    <property type="match status" value="1"/>
</dbReference>
<dbReference type="Gene3D" id="1.20.1260.10">
    <property type="match status" value="1"/>
</dbReference>
<dbReference type="HAMAP" id="MF_01658">
    <property type="entry name" value="COQ7"/>
    <property type="match status" value="1"/>
</dbReference>
<dbReference type="InterPro" id="IPR047809">
    <property type="entry name" value="COQ7_proteobact"/>
</dbReference>
<dbReference type="InterPro" id="IPR012347">
    <property type="entry name" value="Ferritin-like"/>
</dbReference>
<dbReference type="InterPro" id="IPR009078">
    <property type="entry name" value="Ferritin-like_SF"/>
</dbReference>
<dbReference type="InterPro" id="IPR011566">
    <property type="entry name" value="Ubq_synth_Coq7"/>
</dbReference>
<dbReference type="NCBIfam" id="NF033656">
    <property type="entry name" value="DMQ_monoox_COQ7"/>
    <property type="match status" value="1"/>
</dbReference>
<dbReference type="PANTHER" id="PTHR11237:SF4">
    <property type="entry name" value="5-DEMETHOXYUBIQUINONE HYDROXYLASE, MITOCHONDRIAL"/>
    <property type="match status" value="1"/>
</dbReference>
<dbReference type="PANTHER" id="PTHR11237">
    <property type="entry name" value="COENZYME Q10 BIOSYNTHESIS PROTEIN 7"/>
    <property type="match status" value="1"/>
</dbReference>
<dbReference type="Pfam" id="PF03232">
    <property type="entry name" value="COQ7"/>
    <property type="match status" value="1"/>
</dbReference>
<dbReference type="SUPFAM" id="SSF47240">
    <property type="entry name" value="Ferritin-like"/>
    <property type="match status" value="1"/>
</dbReference>
<reference key="1">
    <citation type="journal article" date="2011" name="J. Bacteriol.">
        <title>Complete genome sequence of the metabolically versatile plant growth-promoting endophyte, Variovorax paradoxus S110.</title>
        <authorList>
            <person name="Han J.I."/>
            <person name="Choi H.K."/>
            <person name="Lee S.W."/>
            <person name="Orwin P.M."/>
            <person name="Kim J."/>
            <person name="Laroe S.L."/>
            <person name="Kim T.G."/>
            <person name="O'Neil J."/>
            <person name="Leadbetter J.R."/>
            <person name="Lee S.Y."/>
            <person name="Hur C.G."/>
            <person name="Spain J.C."/>
            <person name="Ovchinnikova G."/>
            <person name="Goodwin L."/>
            <person name="Han C."/>
        </authorList>
    </citation>
    <scope>NUCLEOTIDE SEQUENCE [LARGE SCALE GENOMIC DNA]</scope>
    <source>
        <strain>S110</strain>
    </source>
</reference>
<comment type="function">
    <text evidence="1">Catalyzes the hydroxylation of 2-nonaprenyl-3-methyl-6-methoxy-1,4-benzoquinol during ubiquinone biosynthesis.</text>
</comment>
<comment type="catalytic activity">
    <reaction evidence="1">
        <text>a 5-methoxy-2-methyl-3-(all-trans-polyprenyl)benzene-1,4-diol + AH2 + O2 = a 3-demethylubiquinol + A + H2O</text>
        <dbReference type="Rhea" id="RHEA:50908"/>
        <dbReference type="Rhea" id="RHEA-COMP:10859"/>
        <dbReference type="Rhea" id="RHEA-COMP:10914"/>
        <dbReference type="ChEBI" id="CHEBI:13193"/>
        <dbReference type="ChEBI" id="CHEBI:15377"/>
        <dbReference type="ChEBI" id="CHEBI:15379"/>
        <dbReference type="ChEBI" id="CHEBI:17499"/>
        <dbReference type="ChEBI" id="CHEBI:84167"/>
        <dbReference type="ChEBI" id="CHEBI:84422"/>
        <dbReference type="EC" id="1.14.99.60"/>
    </reaction>
</comment>
<comment type="cofactor">
    <cofactor evidence="1">
        <name>Fe cation</name>
        <dbReference type="ChEBI" id="CHEBI:24875"/>
    </cofactor>
    <text evidence="1">Binds 2 iron ions per subunit.</text>
</comment>
<comment type="pathway">
    <text evidence="1">Cofactor biosynthesis; ubiquinone biosynthesis.</text>
</comment>
<comment type="subcellular location">
    <subcellularLocation>
        <location evidence="1">Cell membrane</location>
        <topology evidence="1">Peripheral membrane protein</topology>
    </subcellularLocation>
</comment>
<comment type="similarity">
    <text evidence="1">Belongs to the COQ7 family.</text>
</comment>
<sequence length="209" mass="22211">MTSTLDPVLTAADAALRTLFARPHATRAAPAPAQAPGEMTDSERREAGALMRVNHVGEVCAQALYTAQAAVARDPVLRARLLEASHEEADHLAWTRQRLDELGARPSVLNPLWYAGAFGLGLVAGRLGDPLSLGFVAETERQVEAHLESHLGRLPAADSASRAVVEQMKIDEAQHAAQAIDAGAAELPAPAKALMRLASRVMTTVAHRI</sequence>
<protein>
    <recommendedName>
        <fullName evidence="1">3-demethoxyubiquinol 3-hydroxylase</fullName>
        <shortName evidence="1">DMQ hydroxylase</shortName>
        <ecNumber evidence="1">1.14.99.60</ecNumber>
    </recommendedName>
    <alternativeName>
        <fullName evidence="1">2-nonaprenyl-3-methyl-6-methoxy-1,4-benzoquinol hydroxylase</fullName>
    </alternativeName>
</protein>
<name>COQ7_VARPS</name>
<accession>C5CPL7</accession>
<keyword id="KW-1003">Cell membrane</keyword>
<keyword id="KW-0408">Iron</keyword>
<keyword id="KW-0472">Membrane</keyword>
<keyword id="KW-0479">Metal-binding</keyword>
<keyword id="KW-0503">Monooxygenase</keyword>
<keyword id="KW-0560">Oxidoreductase</keyword>
<keyword id="KW-0831">Ubiquinone biosynthesis</keyword>
<feature type="chain" id="PRO_1000215857" description="3-demethoxyubiquinol 3-hydroxylase">
    <location>
        <begin position="1"/>
        <end position="209"/>
    </location>
</feature>
<feature type="region of interest" description="Disordered" evidence="2">
    <location>
        <begin position="23"/>
        <end position="42"/>
    </location>
</feature>
<feature type="compositionally biased region" description="Low complexity" evidence="2">
    <location>
        <begin position="23"/>
        <end position="36"/>
    </location>
</feature>
<feature type="binding site" evidence="1">
    <location>
        <position position="58"/>
    </location>
    <ligand>
        <name>Fe cation</name>
        <dbReference type="ChEBI" id="CHEBI:24875"/>
        <label>1</label>
    </ligand>
</feature>
<feature type="binding site" evidence="1">
    <location>
        <position position="88"/>
    </location>
    <ligand>
        <name>Fe cation</name>
        <dbReference type="ChEBI" id="CHEBI:24875"/>
        <label>1</label>
    </ligand>
</feature>
<feature type="binding site" evidence="1">
    <location>
        <position position="88"/>
    </location>
    <ligand>
        <name>Fe cation</name>
        <dbReference type="ChEBI" id="CHEBI:24875"/>
        <label>2</label>
    </ligand>
</feature>
<feature type="binding site" evidence="1">
    <location>
        <position position="91"/>
    </location>
    <ligand>
        <name>Fe cation</name>
        <dbReference type="ChEBI" id="CHEBI:24875"/>
        <label>1</label>
    </ligand>
</feature>
<feature type="binding site" evidence="1">
    <location>
        <position position="140"/>
    </location>
    <ligand>
        <name>Fe cation</name>
        <dbReference type="ChEBI" id="CHEBI:24875"/>
        <label>2</label>
    </ligand>
</feature>
<feature type="binding site" evidence="1">
    <location>
        <position position="172"/>
    </location>
    <ligand>
        <name>Fe cation</name>
        <dbReference type="ChEBI" id="CHEBI:24875"/>
        <label>1</label>
    </ligand>
</feature>
<feature type="binding site" evidence="1">
    <location>
        <position position="172"/>
    </location>
    <ligand>
        <name>Fe cation</name>
        <dbReference type="ChEBI" id="CHEBI:24875"/>
        <label>2</label>
    </ligand>
</feature>
<feature type="binding site" evidence="1">
    <location>
        <position position="175"/>
    </location>
    <ligand>
        <name>Fe cation</name>
        <dbReference type="ChEBI" id="CHEBI:24875"/>
        <label>2</label>
    </ligand>
</feature>
<proteinExistence type="inferred from homology"/>
<gene>
    <name evidence="1" type="primary">coq7</name>
    <name type="ordered locus">Vapar_1087</name>
</gene>
<organism>
    <name type="scientific">Variovorax paradoxus (strain S110)</name>
    <dbReference type="NCBI Taxonomy" id="543728"/>
    <lineage>
        <taxon>Bacteria</taxon>
        <taxon>Pseudomonadati</taxon>
        <taxon>Pseudomonadota</taxon>
        <taxon>Betaproteobacteria</taxon>
        <taxon>Burkholderiales</taxon>
        <taxon>Comamonadaceae</taxon>
        <taxon>Variovorax</taxon>
    </lineage>
</organism>
<evidence type="ECO:0000255" key="1">
    <source>
        <dbReference type="HAMAP-Rule" id="MF_01658"/>
    </source>
</evidence>
<evidence type="ECO:0000256" key="2">
    <source>
        <dbReference type="SAM" id="MobiDB-lite"/>
    </source>
</evidence>